<evidence type="ECO:0000255" key="1">
    <source>
        <dbReference type="HAMAP-Rule" id="MF_01310"/>
    </source>
</evidence>
<evidence type="ECO:0000256" key="2">
    <source>
        <dbReference type="SAM" id="MobiDB-lite"/>
    </source>
</evidence>
<evidence type="ECO:0000305" key="3"/>
<gene>
    <name evidence="1" type="primary">rps11</name>
</gene>
<accession>Q2L937</accession>
<name>RR11_GOSHI</name>
<organism>
    <name type="scientific">Gossypium hirsutum</name>
    <name type="common">Upland cotton</name>
    <name type="synonym">Gossypium mexicanum</name>
    <dbReference type="NCBI Taxonomy" id="3635"/>
    <lineage>
        <taxon>Eukaryota</taxon>
        <taxon>Viridiplantae</taxon>
        <taxon>Streptophyta</taxon>
        <taxon>Embryophyta</taxon>
        <taxon>Tracheophyta</taxon>
        <taxon>Spermatophyta</taxon>
        <taxon>Magnoliopsida</taxon>
        <taxon>eudicotyledons</taxon>
        <taxon>Gunneridae</taxon>
        <taxon>Pentapetalae</taxon>
        <taxon>rosids</taxon>
        <taxon>malvids</taxon>
        <taxon>Malvales</taxon>
        <taxon>Malvaceae</taxon>
        <taxon>Malvoideae</taxon>
        <taxon>Gossypium</taxon>
    </lineage>
</organism>
<keyword id="KW-0150">Chloroplast</keyword>
<keyword id="KW-0934">Plastid</keyword>
<keyword id="KW-1185">Reference proteome</keyword>
<keyword id="KW-0687">Ribonucleoprotein</keyword>
<keyword id="KW-0689">Ribosomal protein</keyword>
<keyword id="KW-0694">RNA-binding</keyword>
<keyword id="KW-0699">rRNA-binding</keyword>
<proteinExistence type="inferred from homology"/>
<comment type="subunit">
    <text evidence="1">Part of the 30S ribosomal subunit.</text>
</comment>
<comment type="subcellular location">
    <subcellularLocation>
        <location>Plastid</location>
        <location>Chloroplast</location>
    </subcellularLocation>
</comment>
<comment type="similarity">
    <text evidence="1">Belongs to the universal ribosomal protein uS11 family.</text>
</comment>
<sequence>MAKPIPKVGSRRNGRSSARKSARRIPKGVIHVQASFNNTIVTVTDVRGRVISWSSAGTCGFKGTRRGTPFAAQTAAGNAIRAVVDQGMQRAEVMIKGPGLGRDAALRAIRRSGILLSFVRDVTPMPHNGCRPPKKRRV</sequence>
<reference key="1">
    <citation type="journal article" date="2006" name="BMC Genomics">
        <title>The complete chloroplast genome sequence of Gossypium hirsutum: organization and phylogenetic relationships to other angiosperms.</title>
        <authorList>
            <person name="Lee S.-B."/>
            <person name="Kaittanis C."/>
            <person name="Jansen R.K."/>
            <person name="Hostetler J.B."/>
            <person name="Tallon L.J."/>
            <person name="Town C.D."/>
            <person name="Daniell H."/>
        </authorList>
    </citation>
    <scope>NUCLEOTIDE SEQUENCE [LARGE SCALE GENOMIC DNA]</scope>
    <source>
        <strain>cv. Coker 310FR</strain>
    </source>
</reference>
<protein>
    <recommendedName>
        <fullName evidence="1">Small ribosomal subunit protein uS11c</fullName>
    </recommendedName>
    <alternativeName>
        <fullName evidence="3">30S ribosomal protein S11, chloroplastic</fullName>
    </alternativeName>
</protein>
<feature type="chain" id="PRO_0000230450" description="Small ribosomal subunit protein uS11c">
    <location>
        <begin position="1"/>
        <end position="138"/>
    </location>
</feature>
<feature type="region of interest" description="Disordered" evidence="2">
    <location>
        <begin position="1"/>
        <end position="24"/>
    </location>
</feature>
<feature type="compositionally biased region" description="Basic residues" evidence="2">
    <location>
        <begin position="9"/>
        <end position="24"/>
    </location>
</feature>
<dbReference type="EMBL" id="DQ345959">
    <property type="protein sequence ID" value="ABC73660.1"/>
    <property type="molecule type" value="Genomic_DNA"/>
</dbReference>
<dbReference type="RefSeq" id="YP_538969.1">
    <property type="nucleotide sequence ID" value="NC_007944.1"/>
</dbReference>
<dbReference type="SMR" id="Q2L937"/>
<dbReference type="GeneID" id="3989137"/>
<dbReference type="KEGG" id="ghi:3989137"/>
<dbReference type="OMA" id="TAVDQGM"/>
<dbReference type="OrthoDB" id="67054at41938"/>
<dbReference type="Proteomes" id="UP000189702">
    <property type="component" value="Chloroplast Pltd"/>
</dbReference>
<dbReference type="GO" id="GO:0009507">
    <property type="term" value="C:chloroplast"/>
    <property type="evidence" value="ECO:0007669"/>
    <property type="project" value="UniProtKB-SubCell"/>
</dbReference>
<dbReference type="GO" id="GO:1990904">
    <property type="term" value="C:ribonucleoprotein complex"/>
    <property type="evidence" value="ECO:0007669"/>
    <property type="project" value="UniProtKB-KW"/>
</dbReference>
<dbReference type="GO" id="GO:0005840">
    <property type="term" value="C:ribosome"/>
    <property type="evidence" value="ECO:0007669"/>
    <property type="project" value="UniProtKB-KW"/>
</dbReference>
<dbReference type="GO" id="GO:0019843">
    <property type="term" value="F:rRNA binding"/>
    <property type="evidence" value="ECO:0007669"/>
    <property type="project" value="UniProtKB-UniRule"/>
</dbReference>
<dbReference type="GO" id="GO:0003735">
    <property type="term" value="F:structural constituent of ribosome"/>
    <property type="evidence" value="ECO:0000318"/>
    <property type="project" value="GO_Central"/>
</dbReference>
<dbReference type="GO" id="GO:0006412">
    <property type="term" value="P:translation"/>
    <property type="evidence" value="ECO:0000318"/>
    <property type="project" value="GO_Central"/>
</dbReference>
<dbReference type="FunFam" id="3.30.420.80:FF:000003">
    <property type="entry name" value="30S ribosomal protein S11, chloroplastic"/>
    <property type="match status" value="1"/>
</dbReference>
<dbReference type="Gene3D" id="3.30.420.80">
    <property type="entry name" value="Ribosomal protein S11"/>
    <property type="match status" value="1"/>
</dbReference>
<dbReference type="HAMAP" id="MF_01310">
    <property type="entry name" value="Ribosomal_uS11"/>
    <property type="match status" value="1"/>
</dbReference>
<dbReference type="InterPro" id="IPR001971">
    <property type="entry name" value="Ribosomal_uS11"/>
</dbReference>
<dbReference type="InterPro" id="IPR019981">
    <property type="entry name" value="Ribosomal_uS11_bac-type"/>
</dbReference>
<dbReference type="InterPro" id="IPR018102">
    <property type="entry name" value="Ribosomal_uS11_CS"/>
</dbReference>
<dbReference type="InterPro" id="IPR036967">
    <property type="entry name" value="Ribosomal_uS11_sf"/>
</dbReference>
<dbReference type="NCBIfam" id="NF003698">
    <property type="entry name" value="PRK05309.1"/>
    <property type="match status" value="1"/>
</dbReference>
<dbReference type="NCBIfam" id="TIGR03632">
    <property type="entry name" value="uS11_bact"/>
    <property type="match status" value="1"/>
</dbReference>
<dbReference type="PANTHER" id="PTHR11759">
    <property type="entry name" value="40S RIBOSOMAL PROTEIN S14/30S RIBOSOMAL PROTEIN S11"/>
    <property type="match status" value="1"/>
</dbReference>
<dbReference type="Pfam" id="PF00411">
    <property type="entry name" value="Ribosomal_S11"/>
    <property type="match status" value="1"/>
</dbReference>
<dbReference type="PIRSF" id="PIRSF002131">
    <property type="entry name" value="Ribosomal_S11"/>
    <property type="match status" value="1"/>
</dbReference>
<dbReference type="SUPFAM" id="SSF53137">
    <property type="entry name" value="Translational machinery components"/>
    <property type="match status" value="1"/>
</dbReference>
<dbReference type="PROSITE" id="PS00054">
    <property type="entry name" value="RIBOSOMAL_S11"/>
    <property type="match status" value="1"/>
</dbReference>
<geneLocation type="chloroplast"/>